<accession>C6E4N1</accession>
<sequence>MARYTGPSCRLCRREGSELFLKGERCYTDKCAIKRRSYPPGQHGQGRIKVSDYGVQLREKQKVRRIYGILENQFRGYFETADRMKGVTGENLLFILERRLDNVAYRLGFATSRDEARQLVRHGHFTLNGRKVNIPSLQVKAGDVLQLREKSRKVAAISESLEGVVRRGIPQWLELEKDAFKGTVKAMPVREDITMPIQEQLIVELYSK</sequence>
<comment type="function">
    <text evidence="1">One of the primary rRNA binding proteins, it binds directly to 16S rRNA where it nucleates assembly of the body of the 30S subunit.</text>
</comment>
<comment type="function">
    <text evidence="1">With S5 and S12 plays an important role in translational accuracy.</text>
</comment>
<comment type="subunit">
    <text evidence="1">Part of the 30S ribosomal subunit. Contacts protein S5. The interaction surface between S4 and S5 is involved in control of translational fidelity.</text>
</comment>
<comment type="similarity">
    <text evidence="1">Belongs to the universal ribosomal protein uS4 family.</text>
</comment>
<feature type="chain" id="PRO_1000214291" description="Small ribosomal subunit protein uS4">
    <location>
        <begin position="1"/>
        <end position="208"/>
    </location>
</feature>
<feature type="domain" description="S4 RNA-binding" evidence="1">
    <location>
        <begin position="98"/>
        <end position="159"/>
    </location>
</feature>
<dbReference type="EMBL" id="CP001661">
    <property type="protein sequence ID" value="ACT19327.1"/>
    <property type="molecule type" value="Genomic_DNA"/>
</dbReference>
<dbReference type="SMR" id="C6E4N1"/>
<dbReference type="STRING" id="443144.GM21_3302"/>
<dbReference type="KEGG" id="gem:GM21_3302"/>
<dbReference type="eggNOG" id="COG0522">
    <property type="taxonomic scope" value="Bacteria"/>
</dbReference>
<dbReference type="HOGENOM" id="CLU_092403_0_2_7"/>
<dbReference type="OrthoDB" id="9803672at2"/>
<dbReference type="GO" id="GO:0015935">
    <property type="term" value="C:small ribosomal subunit"/>
    <property type="evidence" value="ECO:0007669"/>
    <property type="project" value="InterPro"/>
</dbReference>
<dbReference type="GO" id="GO:0019843">
    <property type="term" value="F:rRNA binding"/>
    <property type="evidence" value="ECO:0007669"/>
    <property type="project" value="UniProtKB-UniRule"/>
</dbReference>
<dbReference type="GO" id="GO:0003735">
    <property type="term" value="F:structural constituent of ribosome"/>
    <property type="evidence" value="ECO:0007669"/>
    <property type="project" value="InterPro"/>
</dbReference>
<dbReference type="GO" id="GO:0042274">
    <property type="term" value="P:ribosomal small subunit biogenesis"/>
    <property type="evidence" value="ECO:0007669"/>
    <property type="project" value="TreeGrafter"/>
</dbReference>
<dbReference type="GO" id="GO:0006412">
    <property type="term" value="P:translation"/>
    <property type="evidence" value="ECO:0007669"/>
    <property type="project" value="UniProtKB-UniRule"/>
</dbReference>
<dbReference type="CDD" id="cd00165">
    <property type="entry name" value="S4"/>
    <property type="match status" value="1"/>
</dbReference>
<dbReference type="FunFam" id="1.10.1050.10:FF:000001">
    <property type="entry name" value="30S ribosomal protein S4"/>
    <property type="match status" value="1"/>
</dbReference>
<dbReference type="FunFam" id="3.10.290.10:FF:000001">
    <property type="entry name" value="30S ribosomal protein S4"/>
    <property type="match status" value="1"/>
</dbReference>
<dbReference type="Gene3D" id="1.10.1050.10">
    <property type="entry name" value="Ribosomal Protein S4 Delta 41, Chain A, domain 1"/>
    <property type="match status" value="1"/>
</dbReference>
<dbReference type="Gene3D" id="3.10.290.10">
    <property type="entry name" value="RNA-binding S4 domain"/>
    <property type="match status" value="1"/>
</dbReference>
<dbReference type="HAMAP" id="MF_01306_B">
    <property type="entry name" value="Ribosomal_uS4_B"/>
    <property type="match status" value="1"/>
</dbReference>
<dbReference type="InterPro" id="IPR022801">
    <property type="entry name" value="Ribosomal_uS4"/>
</dbReference>
<dbReference type="InterPro" id="IPR005709">
    <property type="entry name" value="Ribosomal_uS4_bac-type"/>
</dbReference>
<dbReference type="InterPro" id="IPR001912">
    <property type="entry name" value="Ribosomal_uS4_N"/>
</dbReference>
<dbReference type="InterPro" id="IPR002942">
    <property type="entry name" value="S4_RNA-bd"/>
</dbReference>
<dbReference type="InterPro" id="IPR036986">
    <property type="entry name" value="S4_RNA-bd_sf"/>
</dbReference>
<dbReference type="NCBIfam" id="NF003717">
    <property type="entry name" value="PRK05327.1"/>
    <property type="match status" value="1"/>
</dbReference>
<dbReference type="NCBIfam" id="TIGR01017">
    <property type="entry name" value="rpsD_bact"/>
    <property type="match status" value="1"/>
</dbReference>
<dbReference type="PANTHER" id="PTHR11831">
    <property type="entry name" value="30S 40S RIBOSOMAL PROTEIN"/>
    <property type="match status" value="1"/>
</dbReference>
<dbReference type="PANTHER" id="PTHR11831:SF4">
    <property type="entry name" value="SMALL RIBOSOMAL SUBUNIT PROTEIN US4M"/>
    <property type="match status" value="1"/>
</dbReference>
<dbReference type="Pfam" id="PF00163">
    <property type="entry name" value="Ribosomal_S4"/>
    <property type="match status" value="1"/>
</dbReference>
<dbReference type="Pfam" id="PF01479">
    <property type="entry name" value="S4"/>
    <property type="match status" value="1"/>
</dbReference>
<dbReference type="SMART" id="SM01390">
    <property type="entry name" value="Ribosomal_S4"/>
    <property type="match status" value="1"/>
</dbReference>
<dbReference type="SMART" id="SM00363">
    <property type="entry name" value="S4"/>
    <property type="match status" value="1"/>
</dbReference>
<dbReference type="SUPFAM" id="SSF55174">
    <property type="entry name" value="Alpha-L RNA-binding motif"/>
    <property type="match status" value="1"/>
</dbReference>
<dbReference type="PROSITE" id="PS50889">
    <property type="entry name" value="S4"/>
    <property type="match status" value="1"/>
</dbReference>
<name>RS4_GEOSM</name>
<keyword id="KW-0687">Ribonucleoprotein</keyword>
<keyword id="KW-0689">Ribosomal protein</keyword>
<keyword id="KW-0694">RNA-binding</keyword>
<keyword id="KW-0699">rRNA-binding</keyword>
<proteinExistence type="inferred from homology"/>
<gene>
    <name evidence="1" type="primary">rpsD</name>
    <name type="ordered locus">GM21_3302</name>
</gene>
<protein>
    <recommendedName>
        <fullName evidence="1">Small ribosomal subunit protein uS4</fullName>
    </recommendedName>
    <alternativeName>
        <fullName evidence="2">30S ribosomal protein S4</fullName>
    </alternativeName>
</protein>
<evidence type="ECO:0000255" key="1">
    <source>
        <dbReference type="HAMAP-Rule" id="MF_01306"/>
    </source>
</evidence>
<evidence type="ECO:0000305" key="2"/>
<organism>
    <name type="scientific">Geobacter sp. (strain M21)</name>
    <dbReference type="NCBI Taxonomy" id="443144"/>
    <lineage>
        <taxon>Bacteria</taxon>
        <taxon>Pseudomonadati</taxon>
        <taxon>Thermodesulfobacteriota</taxon>
        <taxon>Desulfuromonadia</taxon>
        <taxon>Geobacterales</taxon>
        <taxon>Geobacteraceae</taxon>
        <taxon>Geobacter</taxon>
    </lineage>
</organism>
<reference key="1">
    <citation type="submission" date="2009-07" db="EMBL/GenBank/DDBJ databases">
        <title>Complete sequence of Geobacter sp. M21.</title>
        <authorList>
            <consortium name="US DOE Joint Genome Institute"/>
            <person name="Lucas S."/>
            <person name="Copeland A."/>
            <person name="Lapidus A."/>
            <person name="Glavina del Rio T."/>
            <person name="Dalin E."/>
            <person name="Tice H."/>
            <person name="Bruce D."/>
            <person name="Goodwin L."/>
            <person name="Pitluck S."/>
            <person name="Saunders E."/>
            <person name="Brettin T."/>
            <person name="Detter J.C."/>
            <person name="Han C."/>
            <person name="Larimer F."/>
            <person name="Land M."/>
            <person name="Hauser L."/>
            <person name="Kyrpides N."/>
            <person name="Ovchinnikova G."/>
            <person name="Lovley D."/>
        </authorList>
    </citation>
    <scope>NUCLEOTIDE SEQUENCE [LARGE SCALE GENOMIC DNA]</scope>
    <source>
        <strain>M21</strain>
    </source>
</reference>